<dbReference type="EMBL" id="AJ406943">
    <property type="protein sequence ID" value="CAC27582.1"/>
    <property type="molecule type" value="mRNA"/>
</dbReference>
<dbReference type="EMBL" id="AC100808">
    <property type="status" value="NOT_ANNOTATED_CDS"/>
    <property type="molecule type" value="Genomic_DNA"/>
</dbReference>
<dbReference type="EMBL" id="BC004180">
    <property type="protein sequence ID" value="AAH04180.1"/>
    <property type="molecule type" value="mRNA"/>
</dbReference>
<dbReference type="EMBL" id="BC004212">
    <property type="protein sequence ID" value="AAH04212.1"/>
    <property type="molecule type" value="mRNA"/>
</dbReference>
<dbReference type="EMBL" id="BC101159">
    <property type="protein sequence ID" value="AAI01160.1"/>
    <property type="molecule type" value="mRNA"/>
</dbReference>
<dbReference type="EMBL" id="BC101160">
    <property type="protein sequence ID" value="AAI01161.1"/>
    <property type="molecule type" value="mRNA"/>
</dbReference>
<dbReference type="EMBL" id="BC101162">
    <property type="protein sequence ID" value="AAI01163.1"/>
    <property type="molecule type" value="mRNA"/>
</dbReference>
<dbReference type="CCDS" id="CCDS32649.1"/>
<dbReference type="RefSeq" id="NP_114060.1">
    <property type="nucleotide sequence ID" value="NM_031854.3"/>
</dbReference>
<dbReference type="BioGRID" id="123756">
    <property type="interactions" value="165"/>
</dbReference>
<dbReference type="FunCoup" id="Q9BQ66">
    <property type="interactions" value="106"/>
</dbReference>
<dbReference type="IntAct" id="Q9BQ66">
    <property type="interactions" value="151"/>
</dbReference>
<dbReference type="BioMuta" id="KRTAP4-12"/>
<dbReference type="DMDM" id="38258229"/>
<dbReference type="MassIVE" id="Q9BQ66"/>
<dbReference type="PeptideAtlas" id="Q9BQ66"/>
<dbReference type="Antibodypedia" id="76777">
    <property type="antibodies" value="2 antibodies from 2 providers"/>
</dbReference>
<dbReference type="DNASU" id="83755"/>
<dbReference type="Ensembl" id="ENST00000394014.2">
    <property type="protein sequence ID" value="ENSP00000377582.1"/>
    <property type="gene ID" value="ENSG00000213416.4"/>
</dbReference>
<dbReference type="Ensembl" id="ENST00000571271.1">
    <property type="protein sequence ID" value="ENSP00000458979.1"/>
    <property type="gene ID" value="ENSG00000263236.2"/>
</dbReference>
<dbReference type="Ensembl" id="ENST00000709603.1">
    <property type="protein sequence ID" value="ENSP00000517790.1"/>
    <property type="gene ID" value="ENSG00000292039.1"/>
</dbReference>
<dbReference type="GeneID" id="83755"/>
<dbReference type="KEGG" id="hsa:83755"/>
<dbReference type="MANE-Select" id="ENST00000394014.2">
    <property type="protein sequence ID" value="ENSP00000377582.1"/>
    <property type="RefSeq nucleotide sequence ID" value="NM_031854.3"/>
    <property type="RefSeq protein sequence ID" value="NP_114060.1"/>
</dbReference>
<dbReference type="UCSC" id="uc002hwa.4">
    <property type="organism name" value="human"/>
</dbReference>
<dbReference type="AGR" id="HGNC:16776"/>
<dbReference type="CTD" id="83755"/>
<dbReference type="GeneCards" id="KRTAP4-12"/>
<dbReference type="HGNC" id="HGNC:16776">
    <property type="gene designation" value="KRTAP4-12"/>
</dbReference>
<dbReference type="HPA" id="ENSG00000213416">
    <property type="expression patterns" value="Tissue enriched (skin)"/>
</dbReference>
<dbReference type="neXtProt" id="NX_Q9BQ66"/>
<dbReference type="OpenTargets" id="ENSG00000213416"/>
<dbReference type="PharmGKB" id="PA38416"/>
<dbReference type="VEuPathDB" id="HostDB:ENSG00000213416"/>
<dbReference type="eggNOG" id="KOG4726">
    <property type="taxonomic scope" value="Eukaryota"/>
</dbReference>
<dbReference type="GeneTree" id="ENSGT00940000159486"/>
<dbReference type="HOGENOM" id="CLU_113141_2_0_1"/>
<dbReference type="InParanoid" id="Q9BQ66"/>
<dbReference type="OMA" id="KTEYCKT"/>
<dbReference type="PAN-GO" id="Q9BQ66">
    <property type="GO annotations" value="0 GO annotations based on evolutionary models"/>
</dbReference>
<dbReference type="TreeFam" id="TF351356"/>
<dbReference type="PathwayCommons" id="Q9BQ66"/>
<dbReference type="SignaLink" id="Q9BQ66"/>
<dbReference type="BioGRID-ORCS" id="83755">
    <property type="hits" value="36 hits in 1065 CRISPR screens"/>
</dbReference>
<dbReference type="GenomeRNAi" id="83755"/>
<dbReference type="Pharos" id="Q9BQ66">
    <property type="development level" value="Tdark"/>
</dbReference>
<dbReference type="PRO" id="PR:Q9BQ66"/>
<dbReference type="Proteomes" id="UP000005640">
    <property type="component" value="Chromosome 17"/>
</dbReference>
<dbReference type="RNAct" id="Q9BQ66">
    <property type="molecule type" value="protein"/>
</dbReference>
<dbReference type="Bgee" id="ENSG00000213416">
    <property type="expression patterns" value="Expressed in skin of abdomen and 26 other cell types or tissues"/>
</dbReference>
<dbReference type="GO" id="GO:0005829">
    <property type="term" value="C:cytosol"/>
    <property type="evidence" value="ECO:0007669"/>
    <property type="project" value="UniProtKB-ARBA"/>
</dbReference>
<dbReference type="GO" id="GO:0045095">
    <property type="term" value="C:keratin filament"/>
    <property type="evidence" value="ECO:0007669"/>
    <property type="project" value="InterPro"/>
</dbReference>
<dbReference type="InterPro" id="IPR002494">
    <property type="entry name" value="KAP"/>
</dbReference>
<dbReference type="PANTHER" id="PTHR23262">
    <property type="entry name" value="KERATIN ASSOCIATED PROTEIN"/>
    <property type="match status" value="1"/>
</dbReference>
<dbReference type="PANTHER" id="PTHR23262:SF208">
    <property type="entry name" value="KERATIN-ASSOCIATED PROTEIN 4-1"/>
    <property type="match status" value="1"/>
</dbReference>
<dbReference type="Pfam" id="PF13885">
    <property type="entry name" value="Keratin_B2_2"/>
    <property type="match status" value="2"/>
</dbReference>
<accession>Q9BQ66</accession>
<accession>A3KMC5</accession>
<accession>Q495I0</accession>
<comment type="function">
    <text>In the hair cortex, hair keratin intermediate filaments are embedded in an interfilamentous matrix, consisting of hair keratin-associated proteins (KRTAP), which are essential for the formation of a rigid and resistant hair shaft through their extensive disulfide bond cross-linking with abundant cysteine residues of hair keratins. The matrix proteins include the high-sulfur and high-glycine-tyrosine keratins.</text>
</comment>
<comment type="subunit">
    <text>Interacts with hair keratins.</text>
</comment>
<comment type="interaction">
    <interactant intactId="EBI-739863">
        <id>Q9BQ66</id>
    </interactant>
    <interactant intactId="EBI-12006944">
        <id>O43184-4</id>
        <label>ADAM12</label>
    </interactant>
    <organismsDiffer>false</organismsDiffer>
    <experiments>3</experiments>
</comment>
<comment type="interaction">
    <interactant intactId="EBI-739863">
        <id>Q9BQ66</id>
    </interactant>
    <interactant intactId="EBI-10173507">
        <id>Q6UY14-3</id>
        <label>ADAMTSL4</label>
    </interactant>
    <organismsDiffer>false</organismsDiffer>
    <experiments>3</experiments>
</comment>
<comment type="interaction">
    <interactant intactId="EBI-739863">
        <id>Q9BQ66</id>
    </interactant>
    <interactant intactId="EBI-1211484">
        <id>P05187</id>
        <label>ALPP</label>
    </interactant>
    <organismsDiffer>false</organismsDiffer>
    <experiments>3</experiments>
</comment>
<comment type="interaction">
    <interactant intactId="EBI-739863">
        <id>Q9BQ66</id>
    </interactant>
    <interactant intactId="EBI-16429430">
        <id>A0A0S2Z4M1</id>
        <label>AXIN1</label>
    </interactant>
    <organismsDiffer>false</organismsDiffer>
    <experiments>3</experiments>
</comment>
<comment type="interaction">
    <interactant intactId="EBI-739863">
        <id>Q9BQ66</id>
    </interactant>
    <interactant intactId="EBI-710484">
        <id>O15169</id>
        <label>AXIN1</label>
    </interactant>
    <organismsDiffer>false</organismsDiffer>
    <experiments>3</experiments>
</comment>
<comment type="interaction">
    <interactant intactId="EBI-739863">
        <id>Q9BQ66</id>
    </interactant>
    <interactant intactId="EBI-2949658">
        <id>O95429</id>
        <label>BAG4</label>
    </interactant>
    <organismsDiffer>false</organismsDiffer>
    <experiments>3</experiments>
</comment>
<comment type="interaction">
    <interactant intactId="EBI-739863">
        <id>Q9BQ66</id>
    </interactant>
    <interactant intactId="EBI-744545">
        <id>Q8NEC5</id>
        <label>CATSPER1</label>
    </interactant>
    <organismsDiffer>false</organismsDiffer>
    <experiments>9</experiments>
</comment>
<comment type="interaction">
    <interactant intactId="EBI-739863">
        <id>Q9BQ66</id>
    </interactant>
    <interactant intactId="EBI-10899513">
        <id>Q99626</id>
        <label>CDX2</label>
    </interactant>
    <organismsDiffer>false</organismsDiffer>
    <experiments>3</experiments>
</comment>
<comment type="interaction">
    <interactant intactId="EBI-739863">
        <id>Q9BQ66</id>
    </interactant>
    <interactant intactId="EBI-947551">
        <id>Q9H2X0</id>
        <label>CHRD</label>
    </interactant>
    <organismsDiffer>false</organismsDiffer>
    <experiments>3</experiments>
</comment>
<comment type="interaction">
    <interactant intactId="EBI-739863">
        <id>Q9BQ66</id>
    </interactant>
    <interactant intactId="EBI-11980535">
        <id>P51800-3</id>
        <label>CLCNKA</label>
    </interactant>
    <organismsDiffer>false</organismsDiffer>
    <experiments>3</experiments>
</comment>
<comment type="interaction">
    <interactant intactId="EBI-739863">
        <id>Q9BQ66</id>
    </interactant>
    <interactant intactId="EBI-713677">
        <id>Q9UGL9</id>
        <label>CRCT1</label>
    </interactant>
    <organismsDiffer>false</organismsDiffer>
    <experiments>7</experiments>
</comment>
<comment type="interaction">
    <interactant intactId="EBI-739863">
        <id>Q9BQ66</id>
    </interactant>
    <interactant intactId="EBI-10192698">
        <id>Q02930-3</id>
        <label>CREB5</label>
    </interactant>
    <organismsDiffer>false</organismsDiffer>
    <experiments>9</experiments>
</comment>
<comment type="interaction">
    <interactant intactId="EBI-739863">
        <id>Q9BQ66</id>
    </interactant>
    <interactant intactId="EBI-3867333">
        <id>A8MQ03</id>
        <label>CYSRT1</label>
    </interactant>
    <organismsDiffer>false</organismsDiffer>
    <experiments>3</experiments>
</comment>
<comment type="interaction">
    <interactant intactId="EBI-739863">
        <id>Q9BQ66</id>
    </interactant>
    <interactant intactId="EBI-719816">
        <id>Q9NWN3</id>
        <label>FBXO34</label>
    </interactant>
    <organismsDiffer>false</organismsDiffer>
    <experiments>3</experiments>
</comment>
<comment type="interaction">
    <interactant intactId="EBI-739863">
        <id>Q9BQ66</id>
    </interactant>
    <interactant intactId="EBI-11977403">
        <id>A0A0C3SFZ9</id>
        <label>FCHO1</label>
    </interactant>
    <organismsDiffer>false</organismsDiffer>
    <experiments>3</experiments>
</comment>
<comment type="interaction">
    <interactant intactId="EBI-739863">
        <id>Q9BQ66</id>
    </interactant>
    <interactant intactId="EBI-9050116">
        <id>Q9BTY2</id>
        <label>FUCA2</label>
    </interactant>
    <organismsDiffer>false</organismsDiffer>
    <experiments>3</experiments>
</comment>
<comment type="interaction">
    <interactant intactId="EBI-739863">
        <id>Q9BQ66</id>
    </interactant>
    <interactant intactId="EBI-374781">
        <id>O76003</id>
        <label>GLRX3</label>
    </interactant>
    <organismsDiffer>false</organismsDiffer>
    <experiments>7</experiments>
</comment>
<comment type="interaction">
    <interactant intactId="EBI-739863">
        <id>Q9BQ66</id>
    </interactant>
    <interactant intactId="EBI-4291090">
        <id>Q9Y223</id>
        <label>GNE</label>
    </interactant>
    <organismsDiffer>false</organismsDiffer>
    <experiments>3</experiments>
</comment>
<comment type="interaction">
    <interactant intactId="EBI-739863">
        <id>Q9BQ66</id>
    </interactant>
    <interactant intactId="EBI-5666657">
        <id>Q9NWQ4</id>
        <label>GPATCH2L</label>
    </interactant>
    <organismsDiffer>false</organismsDiffer>
    <experiments>3</experiments>
</comment>
<comment type="interaction">
    <interactant intactId="EBI-739863">
        <id>Q9BQ66</id>
    </interactant>
    <interactant intactId="EBI-740785">
        <id>P49639</id>
        <label>HOXA1</label>
    </interactant>
    <organismsDiffer>false</organismsDiffer>
    <experiments>9</experiments>
</comment>
<comment type="interaction">
    <interactant intactId="EBI-739863">
        <id>Q9BQ66</id>
    </interactant>
    <interactant intactId="EBI-2868897">
        <id>P13284</id>
        <label>IFI30</label>
    </interactant>
    <organismsDiffer>false</organismsDiffer>
    <experiments>3</experiments>
</comment>
<comment type="interaction">
    <interactant intactId="EBI-739863">
        <id>Q9BQ66</id>
    </interactant>
    <interactant intactId="EBI-948001">
        <id>Q15323</id>
        <label>KRT31</label>
    </interactant>
    <organismsDiffer>false</organismsDiffer>
    <experiments>3</experiments>
</comment>
<comment type="interaction">
    <interactant intactId="EBI-739863">
        <id>Q9BQ66</id>
    </interactant>
    <interactant intactId="EBI-11959885">
        <id>Q07627</id>
        <label>KRTAP1-1</label>
    </interactant>
    <organismsDiffer>false</organismsDiffer>
    <experiments>3</experiments>
</comment>
<comment type="interaction">
    <interactant intactId="EBI-739863">
        <id>Q9BQ66</id>
    </interactant>
    <interactant intactId="EBI-11749135">
        <id>Q8IUG1</id>
        <label>KRTAP1-3</label>
    </interactant>
    <organismsDiffer>false</organismsDiffer>
    <experiments>3</experiments>
</comment>
<comment type="interaction">
    <interactant intactId="EBI-739863">
        <id>Q9BQ66</id>
    </interactant>
    <interactant intactId="EBI-10172150">
        <id>P60370</id>
        <label>KRTAP10-5</label>
    </interactant>
    <organismsDiffer>false</organismsDiffer>
    <experiments>3</experiments>
</comment>
<comment type="interaction">
    <interactant intactId="EBI-739863">
        <id>Q9BQ66</id>
    </interactant>
    <interactant intactId="EBI-10171774">
        <id>P60410</id>
        <label>KRTAP10-8</label>
    </interactant>
    <organismsDiffer>false</organismsDiffer>
    <experiments>6</experiments>
</comment>
<comment type="interaction">
    <interactant intactId="EBI-739863">
        <id>Q9BQ66</id>
    </interactant>
    <interactant intactId="EBI-10172052">
        <id>P60411</id>
        <label>KRTAP10-9</label>
    </interactant>
    <organismsDiffer>false</organismsDiffer>
    <experiments>6</experiments>
</comment>
<comment type="interaction">
    <interactant intactId="EBI-739863">
        <id>Q9BQ66</id>
    </interactant>
    <interactant intactId="EBI-12196745">
        <id>Q3LHN2</id>
        <label>KRTAP19-2</label>
    </interactant>
    <organismsDiffer>false</organismsDiffer>
    <experiments>3</experiments>
</comment>
<comment type="interaction">
    <interactant intactId="EBI-739863">
        <id>Q9BQ66</id>
    </interactant>
    <interactant intactId="EBI-14065470">
        <id>Q9BYR9</id>
        <label>KRTAP2-4</label>
    </interactant>
    <organismsDiffer>false</organismsDiffer>
    <experiments>3</experiments>
</comment>
<comment type="interaction">
    <interactant intactId="EBI-739863">
        <id>Q9BQ66</id>
    </interactant>
    <interactant intactId="EBI-3957672">
        <id>Q6PEX3</id>
        <label>KRTAP26-1</label>
    </interactant>
    <organismsDiffer>false</organismsDiffer>
    <experiments>3</experiments>
</comment>
<comment type="interaction">
    <interactant intactId="EBI-739863">
        <id>Q9BQ66</id>
    </interactant>
    <interactant intactId="EBI-9996449">
        <id>Q9BYR8</id>
        <label>KRTAP3-1</label>
    </interactant>
    <organismsDiffer>false</organismsDiffer>
    <experiments>3</experiments>
</comment>
<comment type="interaction">
    <interactant intactId="EBI-739863">
        <id>Q9BQ66</id>
    </interactant>
    <interactant intactId="EBI-12074540">
        <id>Q6L8H4</id>
        <label>KRTAP5-1</label>
    </interactant>
    <organismsDiffer>false</organismsDiffer>
    <experiments>3</experiments>
</comment>
<comment type="interaction">
    <interactant intactId="EBI-739863">
        <id>Q9BQ66</id>
    </interactant>
    <interactant intactId="EBI-10250562">
        <id>Q6L8G9</id>
        <label>KRTAP5-6</label>
    </interactant>
    <organismsDiffer>false</organismsDiffer>
    <experiments>6</experiments>
</comment>
<comment type="interaction">
    <interactant intactId="EBI-739863">
        <id>Q9BQ66</id>
    </interactant>
    <interactant intactId="EBI-3958099">
        <id>P26371</id>
        <label>KRTAP5-9</label>
    </interactant>
    <organismsDiffer>false</organismsDiffer>
    <experiments>8</experiments>
</comment>
<comment type="interaction">
    <interactant intactId="EBI-739863">
        <id>Q9BQ66</id>
    </interactant>
    <interactant intactId="EBI-11962084">
        <id>Q3LI66</id>
        <label>KRTAP6-2</label>
    </interactant>
    <organismsDiffer>false</organismsDiffer>
    <experiments>3</experiments>
</comment>
<comment type="interaction">
    <interactant intactId="EBI-739863">
        <id>Q9BQ66</id>
    </interactant>
    <interactant intactId="EBI-1044640">
        <id>Q9BYQ4</id>
        <label>KRTAP9-2</label>
    </interactant>
    <organismsDiffer>false</organismsDiffer>
    <experiments>8</experiments>
</comment>
<comment type="interaction">
    <interactant intactId="EBI-739863">
        <id>Q9BQ66</id>
    </interactant>
    <interactant intactId="EBI-1043191">
        <id>Q9BYQ3</id>
        <label>KRTAP9-3</label>
    </interactant>
    <organismsDiffer>false</organismsDiffer>
    <experiments>3</experiments>
</comment>
<comment type="interaction">
    <interactant intactId="EBI-739863">
        <id>Q9BQ66</id>
    </interactant>
    <interactant intactId="EBI-11962058">
        <id>Q5T7P2</id>
        <label>LCE1A</label>
    </interactant>
    <organismsDiffer>false</organismsDiffer>
    <experiments>7</experiments>
</comment>
<comment type="interaction">
    <interactant intactId="EBI-739863">
        <id>Q9BQ66</id>
    </interactant>
    <interactant intactId="EBI-10245913">
        <id>Q5T7P3</id>
        <label>LCE1B</label>
    </interactant>
    <organismsDiffer>false</organismsDiffer>
    <experiments>7</experiments>
</comment>
<comment type="interaction">
    <interactant intactId="EBI-739863">
        <id>Q9BQ66</id>
    </interactant>
    <interactant intactId="EBI-12224199">
        <id>Q5T751</id>
        <label>LCE1C</label>
    </interactant>
    <organismsDiffer>false</organismsDiffer>
    <experiments>3</experiments>
</comment>
<comment type="interaction">
    <interactant intactId="EBI-739863">
        <id>Q9BQ66</id>
    </interactant>
    <interactant intactId="EBI-11741311">
        <id>Q5T752</id>
        <label>LCE1D</label>
    </interactant>
    <organismsDiffer>false</organismsDiffer>
    <experiments>3</experiments>
</comment>
<comment type="interaction">
    <interactant intactId="EBI-739863">
        <id>Q9BQ66</id>
    </interactant>
    <interactant intactId="EBI-11955335">
        <id>Q5T753</id>
        <label>LCE1E</label>
    </interactant>
    <organismsDiffer>false</organismsDiffer>
    <experiments>6</experiments>
</comment>
<comment type="interaction">
    <interactant intactId="EBI-739863">
        <id>Q9BQ66</id>
    </interactant>
    <interactant intactId="EBI-11958008">
        <id>Q5T754</id>
        <label>LCE1F</label>
    </interactant>
    <organismsDiffer>false</organismsDiffer>
    <experiments>6</experiments>
</comment>
<comment type="interaction">
    <interactant intactId="EBI-739863">
        <id>Q9BQ66</id>
    </interactant>
    <interactant intactId="EBI-10246607">
        <id>Q5TA79</id>
        <label>LCE2A</label>
    </interactant>
    <organismsDiffer>false</organismsDiffer>
    <experiments>3</experiments>
</comment>
<comment type="interaction">
    <interactant intactId="EBI-739863">
        <id>Q9BQ66</id>
    </interactant>
    <interactant intactId="EBI-11478468">
        <id>O14633</id>
        <label>LCE2B</label>
    </interactant>
    <organismsDiffer>false</organismsDiffer>
    <experiments>6</experiments>
</comment>
<comment type="interaction">
    <interactant intactId="EBI-739863">
        <id>Q9BQ66</id>
    </interactant>
    <interactant intactId="EBI-11973993">
        <id>Q5TA81</id>
        <label>LCE2C</label>
    </interactant>
    <organismsDiffer>false</organismsDiffer>
    <experiments>4</experiments>
</comment>
<comment type="interaction">
    <interactant intactId="EBI-739863">
        <id>Q9BQ66</id>
    </interactant>
    <interactant intactId="EBI-10246750">
        <id>Q5TA82</id>
        <label>LCE2D</label>
    </interactant>
    <organismsDiffer>false</organismsDiffer>
    <experiments>6</experiments>
</comment>
<comment type="interaction">
    <interactant intactId="EBI-739863">
        <id>Q9BQ66</id>
    </interactant>
    <interactant intactId="EBI-9394625">
        <id>Q5TA76</id>
        <label>LCE3A</label>
    </interactant>
    <organismsDiffer>false</organismsDiffer>
    <experiments>8</experiments>
</comment>
<comment type="interaction">
    <interactant intactId="EBI-739863">
        <id>Q9BQ66</id>
    </interactant>
    <interactant intactId="EBI-11974495">
        <id>Q5TA77</id>
        <label>LCE3B</label>
    </interactant>
    <organismsDiffer>false</organismsDiffer>
    <experiments>3</experiments>
</comment>
<comment type="interaction">
    <interactant intactId="EBI-739863">
        <id>Q9BQ66</id>
    </interactant>
    <interactant intactId="EBI-10245291">
        <id>Q5T5A8</id>
        <label>LCE3C</label>
    </interactant>
    <organismsDiffer>false</organismsDiffer>
    <experiments>8</experiments>
</comment>
<comment type="interaction">
    <interactant intactId="EBI-739863">
        <id>Q9BQ66</id>
    </interactant>
    <interactant intactId="EBI-6658837">
        <id>Q9BYE3</id>
        <label>LCE3D</label>
    </interactant>
    <organismsDiffer>false</organismsDiffer>
    <experiments>8</experiments>
</comment>
<comment type="interaction">
    <interactant intactId="EBI-739863">
        <id>Q9BQ66</id>
    </interactant>
    <interactant intactId="EBI-10245456">
        <id>Q5T5B0</id>
        <label>LCE3E</label>
    </interactant>
    <organismsDiffer>false</organismsDiffer>
    <experiments>9</experiments>
</comment>
<comment type="interaction">
    <interactant intactId="EBI-739863">
        <id>Q9BQ66</id>
    </interactant>
    <interactant intactId="EBI-10246358">
        <id>Q5TA78</id>
        <label>LCE4A</label>
    </interactant>
    <organismsDiffer>false</organismsDiffer>
    <experiments>9</experiments>
</comment>
<comment type="interaction">
    <interactant intactId="EBI-739863">
        <id>Q9BQ66</id>
    </interactant>
    <interactant intactId="EBI-11955689">
        <id>Q5TCM9</id>
        <label>LCE5A</label>
    </interactant>
    <organismsDiffer>false</organismsDiffer>
    <experiments>9</experiments>
</comment>
<comment type="interaction">
    <interactant intactId="EBI-739863">
        <id>Q9BQ66</id>
    </interactant>
    <interactant intactId="EBI-18115868">
        <id>Q5T871</id>
        <label>LELP1</label>
    </interactant>
    <organismsDiffer>false</organismsDiffer>
    <experiments>3</experiments>
</comment>
<comment type="interaction">
    <interactant intactId="EBI-739863">
        <id>Q9BQ66</id>
    </interactant>
    <interactant intactId="EBI-947402">
        <id>O60336</id>
        <label>MAPKBP1</label>
    </interactant>
    <organismsDiffer>false</organismsDiffer>
    <experiments>6</experiments>
</comment>
<comment type="interaction">
    <interactant intactId="EBI-739863">
        <id>Q9BQ66</id>
    </interactant>
    <interactant intactId="EBI-16439278">
        <id>Q6FHY5</id>
        <label>MEOX2</label>
    </interactant>
    <organismsDiffer>false</organismsDiffer>
    <experiments>3</experiments>
</comment>
<comment type="interaction">
    <interactant intactId="EBI-739863">
        <id>Q9BQ66</id>
    </interactant>
    <interactant intactId="EBI-945833">
        <id>Q7Z3S9</id>
        <label>NOTCH2NLA</label>
    </interactant>
    <organismsDiffer>false</organismsDiffer>
    <experiments>3</experiments>
</comment>
<comment type="interaction">
    <interactant intactId="EBI-739863">
        <id>Q9BQ66</id>
    </interactant>
    <interactant intactId="EBI-1210753">
        <id>Q7Z417</id>
        <label>NUFIP2</label>
    </interactant>
    <organismsDiffer>false</organismsDiffer>
    <experiments>8</experiments>
</comment>
<comment type="interaction">
    <interactant intactId="EBI-739863">
        <id>Q9BQ66</id>
    </interactant>
    <interactant intactId="EBI-740446">
        <id>P32242</id>
        <label>OTX1</label>
    </interactant>
    <organismsDiffer>false</organismsDiffer>
    <experiments>7</experiments>
</comment>
<comment type="interaction">
    <interactant intactId="EBI-739863">
        <id>Q9BQ66</id>
    </interactant>
    <interactant intactId="EBI-751290">
        <id>Q92824</id>
        <label>PCSK5</label>
    </interactant>
    <organismsDiffer>false</organismsDiffer>
    <experiments>3</experiments>
</comment>
<comment type="interaction">
    <interactant intactId="EBI-739863">
        <id>Q9BQ66</id>
    </interactant>
    <interactant intactId="EBI-17236143">
        <id>Q12837</id>
        <label>POU4F2</label>
    </interactant>
    <organismsDiffer>false</organismsDiffer>
    <experiments>3</experiments>
</comment>
<comment type="interaction">
    <interactant intactId="EBI-739863">
        <id>Q9BQ66</id>
    </interactant>
    <interactant intactId="EBI-1053424">
        <id>O43741</id>
        <label>PRKAB2</label>
    </interactant>
    <organismsDiffer>false</organismsDiffer>
    <experiments>3</experiments>
</comment>
<comment type="interaction">
    <interactant intactId="EBI-739863">
        <id>Q9BQ66</id>
    </interactant>
    <interactant intactId="EBI-1181439">
        <id>P54619</id>
        <label>PRKAG1</label>
    </interactant>
    <organismsDiffer>false</organismsDiffer>
    <experiments>3</experiments>
</comment>
<comment type="interaction">
    <interactant intactId="EBI-739863">
        <id>Q9BQ66</id>
    </interactant>
    <interactant intactId="EBI-7199479">
        <id>Q8WUK0</id>
        <label>PTPMT1</label>
    </interactant>
    <organismsDiffer>false</organismsDiffer>
    <experiments>3</experiments>
</comment>
<comment type="interaction">
    <interactant intactId="EBI-739863">
        <id>Q9BQ66</id>
    </interactant>
    <interactant intactId="EBI-948428">
        <id>Q9Y2K5</id>
        <label>R3HDM2</label>
    </interactant>
    <organismsDiffer>false</organismsDiffer>
    <experiments>3</experiments>
</comment>
<comment type="interaction">
    <interactant intactId="EBI-739863">
        <id>Q9BQ66</id>
    </interactant>
    <interactant intactId="EBI-10313866">
        <id>Q9NUL5</id>
        <label>SHFL</label>
    </interactant>
    <organismsDiffer>false</organismsDiffer>
    <experiments>3</experiments>
</comment>
<comment type="interaction">
    <interactant intactId="EBI-739863">
        <id>Q9BQ66</id>
    </interactant>
    <interactant intactId="EBI-11955083">
        <id>Q9NUL5-4</id>
        <label>SHFL</label>
    </interactant>
    <organismsDiffer>false</organismsDiffer>
    <experiments>3</experiments>
</comment>
<comment type="interaction">
    <interactant intactId="EBI-739863">
        <id>Q9BQ66</id>
    </interactant>
    <interactant intactId="EBI-750494">
        <id>P49901</id>
        <label>SMCP</label>
    </interactant>
    <organismsDiffer>false</organismsDiffer>
    <experiments>11</experiments>
</comment>
<comment type="interaction">
    <interactant intactId="EBI-739863">
        <id>Q9BQ66</id>
    </interactant>
    <interactant intactId="EBI-3866665">
        <id>O43609</id>
        <label>SPRY1</label>
    </interactant>
    <organismsDiffer>false</organismsDiffer>
    <experiments>3</experiments>
</comment>
<comment type="interaction">
    <interactant intactId="EBI-739863">
        <id>Q9BQ66</id>
    </interactant>
    <interactant intactId="EBI-742487">
        <id>O43597</id>
        <label>SPRY2</label>
    </interactant>
    <organismsDiffer>false</organismsDiffer>
    <experiments>4</experiments>
</comment>
<comment type="interaction">
    <interactant intactId="EBI-739863">
        <id>Q9BQ66</id>
    </interactant>
    <interactant intactId="EBI-2853126">
        <id>Q9NUY8</id>
        <label>TBC1D23</label>
    </interactant>
    <organismsDiffer>false</organismsDiffer>
    <experiments>3</experiments>
</comment>
<comment type="interaction">
    <interactant intactId="EBI-739863">
        <id>Q9BQ66</id>
    </interactant>
    <interactant intactId="EBI-2562368">
        <id>P22735</id>
        <label>TGM1</label>
    </interactant>
    <organismsDiffer>false</organismsDiffer>
    <experiments>3</experiments>
</comment>
<comment type="interaction">
    <interactant intactId="EBI-739863">
        <id>Q9BQ66</id>
    </interactant>
    <interactant intactId="EBI-2825190">
        <id>Q86UY0</id>
        <label>TXNDC5</label>
    </interactant>
    <organismsDiffer>false</organismsDiffer>
    <experiments>3</experiments>
</comment>
<comment type="interaction">
    <interactant intactId="EBI-739863">
        <id>Q9BQ66</id>
    </interactant>
    <interactant intactId="EBI-717634">
        <id>P17024</id>
        <label>ZNF20</label>
    </interactant>
    <organismsDiffer>false</organismsDiffer>
    <experiments>3</experiments>
</comment>
<comment type="interaction">
    <interactant intactId="EBI-739863">
        <id>Q9BQ66</id>
    </interactant>
    <interactant intactId="EBI-744257">
        <id>Q96IQ9</id>
        <label>ZNF414</label>
    </interactant>
    <organismsDiffer>false</organismsDiffer>
    <experiments>3</experiments>
</comment>
<comment type="interaction">
    <interactant intactId="EBI-739863">
        <id>Q9BQ66</id>
    </interactant>
    <interactant intactId="EBI-10226171">
        <id>Q09FC8</id>
        <label>ZNF415</label>
    </interactant>
    <organismsDiffer>false</organismsDiffer>
    <experiments>3</experiments>
</comment>
<comment type="interaction">
    <interactant intactId="EBI-739863">
        <id>Q9BQ66</id>
    </interactant>
    <interactant intactId="EBI-10486136">
        <id>Q6ZNH5</id>
        <label>ZNF497</label>
    </interactant>
    <organismsDiffer>false</organismsDiffer>
    <experiments>3</experiments>
</comment>
<comment type="interaction">
    <interactant intactId="EBI-739863">
        <id>Q9BQ66</id>
    </interactant>
    <interactant intactId="EBI-745520">
        <id>Q9P0T4</id>
        <label>ZNF581</label>
    </interactant>
    <organismsDiffer>false</organismsDiffer>
    <experiments>4</experiments>
</comment>
<comment type="interaction">
    <interactant intactId="EBI-739863">
        <id>Q9BQ66</id>
    </interactant>
    <interactant intactId="EBI-11090299">
        <id>Q9H7X3</id>
        <label>ZNF696</label>
    </interactant>
    <organismsDiffer>false</organismsDiffer>
    <experiments>3</experiments>
</comment>
<comment type="interaction">
    <interactant intactId="EBI-739863">
        <id>Q9BQ66</id>
    </interactant>
    <interactant intactId="EBI-11962574">
        <id>Q96EG3</id>
        <label>ZNF837</label>
    </interactant>
    <organismsDiffer>false</organismsDiffer>
    <experiments>3</experiments>
</comment>
<comment type="interaction">
    <interactant intactId="EBI-739863">
        <id>Q9BQ66</id>
    </interactant>
    <interactant intactId="EBI-3920053">
        <id>Q16670</id>
        <label>ZSCAN26</label>
    </interactant>
    <organismsDiffer>false</organismsDiffer>
    <experiments>3</experiments>
</comment>
<comment type="interaction">
    <interactant intactId="EBI-739863">
        <id>Q9BQ66</id>
    </interactant>
    <interactant intactId="EBI-10315054">
        <id>Q9NWL9</id>
    </interactant>
    <organismsDiffer>false</organismsDiffer>
    <experiments>3</experiments>
</comment>
<comment type="interaction">
    <interactant intactId="EBI-739863">
        <id>Q9BQ66</id>
    </interactant>
    <interactant intactId="EBI-3957603">
        <id>P09022</id>
        <label>Hoxa1</label>
    </interactant>
    <organismsDiffer>true</organismsDiffer>
    <experiments>4</experiments>
</comment>
<comment type="tissue specificity">
    <text evidence="1">Expressed in the hair follicles.</text>
</comment>
<comment type="polymorphism">
    <text evidence="1">Numerous size polymorphism are present in KRTAP4 gene family, which are mainly due to variations in the sequence encoding cysteine-rich repeat segments (PubMed:15955084).</text>
</comment>
<comment type="similarity">
    <text evidence="2">Belongs to the KRTAP type 4 family.</text>
</comment>
<gene>
    <name type="primary">KRTAP4-12</name>
    <name type="synonym">KAP4.12</name>
    <name type="synonym">KRTAP4.12</name>
</gene>
<feature type="chain" id="PRO_0000185178" description="Keratin-associated protein 4-12">
    <location>
        <begin position="1"/>
        <end position="201"/>
    </location>
</feature>
<feature type="repeat" description="1">
    <location>
        <begin position="5"/>
        <end position="9"/>
    </location>
</feature>
<feature type="repeat" description="2">
    <location>
        <begin position="20"/>
        <end position="24"/>
    </location>
</feature>
<feature type="repeat" description="3">
    <location>
        <begin position="25"/>
        <end position="29"/>
    </location>
</feature>
<feature type="repeat" description="4">
    <location>
        <begin position="30"/>
        <end position="34"/>
    </location>
</feature>
<feature type="repeat" description="5">
    <location>
        <begin position="35"/>
        <end position="39"/>
    </location>
</feature>
<feature type="repeat" description="6">
    <location>
        <begin position="40"/>
        <end position="44"/>
    </location>
</feature>
<feature type="repeat" description="7">
    <location>
        <begin position="45"/>
        <end position="49"/>
    </location>
</feature>
<feature type="repeat" description="8">
    <location>
        <begin position="50"/>
        <end position="54"/>
    </location>
</feature>
<feature type="repeat" description="9">
    <location>
        <begin position="55"/>
        <end position="59"/>
    </location>
</feature>
<feature type="repeat" description="10">
    <location>
        <begin position="60"/>
        <end position="64"/>
    </location>
</feature>
<feature type="repeat" description="11">
    <location>
        <begin position="65"/>
        <end position="69"/>
    </location>
</feature>
<feature type="repeat" description="12">
    <location>
        <begin position="70"/>
        <end position="74"/>
    </location>
</feature>
<feature type="repeat" description="13">
    <location>
        <begin position="75"/>
        <end position="79"/>
    </location>
</feature>
<feature type="repeat" description="14">
    <location>
        <begin position="80"/>
        <end position="84"/>
    </location>
</feature>
<feature type="repeat" description="15">
    <location>
        <begin position="85"/>
        <end position="89"/>
    </location>
</feature>
<feature type="repeat" description="16">
    <location>
        <begin position="90"/>
        <end position="94"/>
    </location>
</feature>
<feature type="repeat" description="17">
    <location>
        <begin position="95"/>
        <end position="99"/>
    </location>
</feature>
<feature type="repeat" description="18">
    <location>
        <begin position="100"/>
        <end position="104"/>
    </location>
</feature>
<feature type="repeat" description="19">
    <location>
        <begin position="105"/>
        <end position="109"/>
    </location>
</feature>
<feature type="repeat" description="20">
    <location>
        <begin position="110"/>
        <end position="114"/>
    </location>
</feature>
<feature type="repeat" description="21">
    <location>
        <begin position="115"/>
        <end position="119"/>
    </location>
</feature>
<feature type="repeat" description="22">
    <location>
        <begin position="120"/>
        <end position="124"/>
    </location>
</feature>
<feature type="repeat" description="23">
    <location>
        <begin position="125"/>
        <end position="129"/>
    </location>
</feature>
<feature type="repeat" description="24">
    <location>
        <begin position="130"/>
        <end position="134"/>
    </location>
</feature>
<feature type="repeat" description="25">
    <location>
        <begin position="135"/>
        <end position="139"/>
    </location>
</feature>
<feature type="repeat" description="26">
    <location>
        <begin position="140"/>
        <end position="144"/>
    </location>
</feature>
<feature type="repeat" description="27">
    <location>
        <begin position="145"/>
        <end position="149"/>
    </location>
</feature>
<feature type="repeat" description="28">
    <location>
        <begin position="155"/>
        <end position="159"/>
    </location>
</feature>
<feature type="repeat" description="29">
    <location>
        <begin position="160"/>
        <end position="164"/>
    </location>
</feature>
<feature type="repeat" description="30">
    <location>
        <begin position="165"/>
        <end position="169"/>
    </location>
</feature>
<feature type="region of interest" description="31 X 5 AA repeats of C-C-[GRQVIL]-[SPTR]-[VSTQPC]">
    <location>
        <begin position="5"/>
        <end position="169"/>
    </location>
</feature>
<feature type="sequence variant" id="VAR_064563" description="In allele KAP4.12-v1." evidence="1">
    <location>
        <begin position="105"/>
        <end position="144"/>
    </location>
</feature>
<sequence>MVNSCCGSVCSDQGCGLENCCRPSCCQTTCCRTTCCRPSCCVSSCCRPQCCQSVCCQPTCCRPSCCQTTCCRTTCCRPSCCVSSCCRPQCCQSVCCQPTCCRPSCCQTTCCRTTCCRPSCCVSSCCRPQCCQSVCCQPTCCRPSCCISSSCCPSCCESSCCRPCCCLRPVCGRVSCHTTCYRPTCVISTCPRPLCCASSCC</sequence>
<proteinExistence type="evidence at protein level"/>
<keyword id="KW-0416">Keratin</keyword>
<keyword id="KW-1185">Reference proteome</keyword>
<keyword id="KW-0677">Repeat</keyword>
<protein>
    <recommendedName>
        <fullName>Keratin-associated protein 4-12</fullName>
    </recommendedName>
    <alternativeName>
        <fullName>Keratin-associated protein 4.12</fullName>
    </alternativeName>
    <alternativeName>
        <fullName>Ultrahigh sulfur keratin-associated protein 4.12</fullName>
    </alternativeName>
</protein>
<evidence type="ECO:0000269" key="1">
    <source>
    </source>
</evidence>
<evidence type="ECO:0000305" key="2"/>
<organism>
    <name type="scientific">Homo sapiens</name>
    <name type="common">Human</name>
    <dbReference type="NCBI Taxonomy" id="9606"/>
    <lineage>
        <taxon>Eukaryota</taxon>
        <taxon>Metazoa</taxon>
        <taxon>Chordata</taxon>
        <taxon>Craniata</taxon>
        <taxon>Vertebrata</taxon>
        <taxon>Euteleostomi</taxon>
        <taxon>Mammalia</taxon>
        <taxon>Eutheria</taxon>
        <taxon>Euarchontoglires</taxon>
        <taxon>Primates</taxon>
        <taxon>Haplorrhini</taxon>
        <taxon>Catarrhini</taxon>
        <taxon>Hominidae</taxon>
        <taxon>Homo</taxon>
    </lineage>
</organism>
<reference key="1">
    <citation type="journal article" date="2001" name="J. Biol. Chem.">
        <title>Characterization of a cluster of human high/ultrahigh sulfur keratin-associated protein genes embedded in the type I keratin gene domain on chromosome 17q12-21.</title>
        <authorList>
            <person name="Rogers M.A."/>
            <person name="Langbein L."/>
            <person name="Winter H."/>
            <person name="Ehmann C."/>
            <person name="Praetzel S."/>
            <person name="Korn B."/>
            <person name="Schweizer J."/>
        </authorList>
    </citation>
    <scope>NUCLEOTIDE SEQUENCE [MRNA]</scope>
    <source>
        <tissue>Scalp</tissue>
    </source>
</reference>
<reference key="2">
    <citation type="journal article" date="2006" name="Nature">
        <title>DNA sequence of human chromosome 17 and analysis of rearrangement in the human lineage.</title>
        <authorList>
            <person name="Zody M.C."/>
            <person name="Garber M."/>
            <person name="Adams D.J."/>
            <person name="Sharpe T."/>
            <person name="Harrow J."/>
            <person name="Lupski J.R."/>
            <person name="Nicholson C."/>
            <person name="Searle S.M."/>
            <person name="Wilming L."/>
            <person name="Young S.K."/>
            <person name="Abouelleil A."/>
            <person name="Allen N.R."/>
            <person name="Bi W."/>
            <person name="Bloom T."/>
            <person name="Borowsky M.L."/>
            <person name="Bugalter B.E."/>
            <person name="Butler J."/>
            <person name="Chang J.L."/>
            <person name="Chen C.-K."/>
            <person name="Cook A."/>
            <person name="Corum B."/>
            <person name="Cuomo C.A."/>
            <person name="de Jong P.J."/>
            <person name="DeCaprio D."/>
            <person name="Dewar K."/>
            <person name="FitzGerald M."/>
            <person name="Gilbert J."/>
            <person name="Gibson R."/>
            <person name="Gnerre S."/>
            <person name="Goldstein S."/>
            <person name="Grafham D.V."/>
            <person name="Grocock R."/>
            <person name="Hafez N."/>
            <person name="Hagopian D.S."/>
            <person name="Hart E."/>
            <person name="Norman C.H."/>
            <person name="Humphray S."/>
            <person name="Jaffe D.B."/>
            <person name="Jones M."/>
            <person name="Kamal M."/>
            <person name="Khodiyar V.K."/>
            <person name="LaButti K."/>
            <person name="Laird G."/>
            <person name="Lehoczky J."/>
            <person name="Liu X."/>
            <person name="Lokyitsang T."/>
            <person name="Loveland J."/>
            <person name="Lui A."/>
            <person name="Macdonald P."/>
            <person name="Major J.E."/>
            <person name="Matthews L."/>
            <person name="Mauceli E."/>
            <person name="McCarroll S.A."/>
            <person name="Mihalev A.H."/>
            <person name="Mudge J."/>
            <person name="Nguyen C."/>
            <person name="Nicol R."/>
            <person name="O'Leary S.B."/>
            <person name="Osoegawa K."/>
            <person name="Schwartz D.C."/>
            <person name="Shaw-Smith C."/>
            <person name="Stankiewicz P."/>
            <person name="Steward C."/>
            <person name="Swarbreck D."/>
            <person name="Venkataraman V."/>
            <person name="Whittaker C.A."/>
            <person name="Yang X."/>
            <person name="Zimmer A.R."/>
            <person name="Bradley A."/>
            <person name="Hubbard T."/>
            <person name="Birren B.W."/>
            <person name="Rogers J."/>
            <person name="Lander E.S."/>
            <person name="Nusbaum C."/>
        </authorList>
    </citation>
    <scope>NUCLEOTIDE SEQUENCE [LARGE SCALE GENOMIC DNA]</scope>
</reference>
<reference key="3">
    <citation type="journal article" date="2004" name="Genome Res.">
        <title>The status, quality, and expansion of the NIH full-length cDNA project: the Mammalian Gene Collection (MGC).</title>
        <authorList>
            <consortium name="The MGC Project Team"/>
        </authorList>
    </citation>
    <scope>NUCLEOTIDE SEQUENCE [LARGE SCALE MRNA]</scope>
    <source>
        <tissue>Muscle</tissue>
    </source>
</reference>
<reference key="4">
    <citation type="journal article" date="2005" name="J. Invest. Dermatol.">
        <title>Size polymorphisms in the human ultrahigh sulfur hair keratin-associated protein 4, KAP4, gene family.</title>
        <authorList>
            <person name="Kariya N."/>
            <person name="Shimomura Y."/>
            <person name="Ito M."/>
        </authorList>
    </citation>
    <scope>TISSUE SPECIFICITY</scope>
    <scope>POLYMORPHISM</scope>
    <scope>VARIANT 105-CYS--SER-144 DEL</scope>
</reference>
<name>KR412_HUMAN</name>